<evidence type="ECO:0000255" key="1">
    <source>
        <dbReference type="HAMAP-Rule" id="MF_01067"/>
    </source>
</evidence>
<dbReference type="EMBL" id="CP000857">
    <property type="protein sequence ID" value="ACN46131.1"/>
    <property type="molecule type" value="Genomic_DNA"/>
</dbReference>
<dbReference type="RefSeq" id="WP_000028505.1">
    <property type="nucleotide sequence ID" value="NC_012125.1"/>
</dbReference>
<dbReference type="KEGG" id="sei:SPC_1995"/>
<dbReference type="HOGENOM" id="CLU_073287_0_0_6"/>
<dbReference type="Proteomes" id="UP000001599">
    <property type="component" value="Chromosome"/>
</dbReference>
<dbReference type="GO" id="GO:0005886">
    <property type="term" value="C:plasma membrane"/>
    <property type="evidence" value="ECO:0007669"/>
    <property type="project" value="UniProtKB-SubCell"/>
</dbReference>
<dbReference type="HAMAP" id="MF_01067">
    <property type="entry name" value="UPF0259"/>
    <property type="match status" value="1"/>
</dbReference>
<dbReference type="InterPro" id="IPR009627">
    <property type="entry name" value="UPF0259"/>
</dbReference>
<dbReference type="NCBIfam" id="NF002774">
    <property type="entry name" value="PRK02868.1"/>
    <property type="match status" value="1"/>
</dbReference>
<dbReference type="Pfam" id="PF06790">
    <property type="entry name" value="UPF0259"/>
    <property type="match status" value="1"/>
</dbReference>
<comment type="subcellular location">
    <subcellularLocation>
        <location evidence="1">Cell inner membrane</location>
        <topology evidence="1">Multi-pass membrane protein</topology>
    </subcellularLocation>
</comment>
<comment type="similarity">
    <text evidence="1">Belongs to the UPF0259 family.</text>
</comment>
<organism>
    <name type="scientific">Salmonella paratyphi C (strain RKS4594)</name>
    <dbReference type="NCBI Taxonomy" id="476213"/>
    <lineage>
        <taxon>Bacteria</taxon>
        <taxon>Pseudomonadati</taxon>
        <taxon>Pseudomonadota</taxon>
        <taxon>Gammaproteobacteria</taxon>
        <taxon>Enterobacterales</taxon>
        <taxon>Enterobacteriaceae</taxon>
        <taxon>Salmonella</taxon>
    </lineage>
</organism>
<gene>
    <name evidence="1" type="primary">yciC</name>
    <name type="ordered locus">SPC_1995</name>
</gene>
<protein>
    <recommendedName>
        <fullName evidence="1">UPF0259 membrane protein YciC</fullName>
    </recommendedName>
</protein>
<proteinExistence type="inferred from homology"/>
<sequence>MSITAKSVYRDAGNFFRNQFITILLVSLLCAFITVVLGHAFSPSDAQIAQLSEGEHLAGSAGLFELVQNMTPEQQQILLRASAASTFSGLIGNAILAGGIILMIQLVSAGHRVSALRAIGASAPALPKLFILIFLTTLLVQIGIMLIIVPGIIMAIVLALAPVMLVEEKMGVFAAMRSSMRLAWANMRLVAPAVIGWLLAKTLLLLFAPSFAVLTPNVGAVLANTLSNLISAVLLIYLFRLYMLIRQ</sequence>
<reference key="1">
    <citation type="journal article" date="2009" name="PLoS ONE">
        <title>Salmonella paratyphi C: genetic divergence from Salmonella choleraesuis and pathogenic convergence with Salmonella typhi.</title>
        <authorList>
            <person name="Liu W.-Q."/>
            <person name="Feng Y."/>
            <person name="Wang Y."/>
            <person name="Zou Q.-H."/>
            <person name="Chen F."/>
            <person name="Guo J.-T."/>
            <person name="Peng Y.-H."/>
            <person name="Jin Y."/>
            <person name="Li Y.-G."/>
            <person name="Hu S.-N."/>
            <person name="Johnston R.N."/>
            <person name="Liu G.-R."/>
            <person name="Liu S.-L."/>
        </authorList>
    </citation>
    <scope>NUCLEOTIDE SEQUENCE [LARGE SCALE GENOMIC DNA]</scope>
    <source>
        <strain>RKS4594</strain>
    </source>
</reference>
<accession>C0Q399</accession>
<name>YCIC_SALPC</name>
<feature type="chain" id="PRO_1000149744" description="UPF0259 membrane protein YciC">
    <location>
        <begin position="1"/>
        <end position="247"/>
    </location>
</feature>
<feature type="transmembrane region" description="Helical" evidence="1">
    <location>
        <begin position="20"/>
        <end position="40"/>
    </location>
</feature>
<feature type="transmembrane region" description="Helical" evidence="1">
    <location>
        <begin position="87"/>
        <end position="107"/>
    </location>
</feature>
<feature type="transmembrane region" description="Helical" evidence="1">
    <location>
        <begin position="118"/>
        <end position="140"/>
    </location>
</feature>
<feature type="transmembrane region" description="Helical" evidence="1">
    <location>
        <begin position="152"/>
        <end position="172"/>
    </location>
</feature>
<feature type="transmembrane region" description="Helical" evidence="1">
    <location>
        <begin position="194"/>
        <end position="214"/>
    </location>
</feature>
<feature type="transmembrane region" description="Helical" evidence="1">
    <location>
        <begin position="219"/>
        <end position="239"/>
    </location>
</feature>
<keyword id="KW-0997">Cell inner membrane</keyword>
<keyword id="KW-1003">Cell membrane</keyword>
<keyword id="KW-0472">Membrane</keyword>
<keyword id="KW-0812">Transmembrane</keyword>
<keyword id="KW-1133">Transmembrane helix</keyword>